<gene>
    <name type="primary">fliP</name>
</gene>
<keyword id="KW-0975">Bacterial flagellum</keyword>
<keyword id="KW-1005">Bacterial flagellum biogenesis</keyword>
<keyword id="KW-1006">Bacterial flagellum protein export</keyword>
<keyword id="KW-1003">Cell membrane</keyword>
<keyword id="KW-0472">Membrane</keyword>
<keyword id="KW-0653">Protein transport</keyword>
<keyword id="KW-0812">Transmembrane</keyword>
<keyword id="KW-1133">Transmembrane helix</keyword>
<keyword id="KW-0813">Transport</keyword>
<sequence>MTRRNPMRREMPSPACPGHRHAPPRQAIETGARQMRAAPCRPNRPGKARAPRAARMMALAGSALAAGLLLAGSAAAAGFPAISVTEGTGGTSYLLSLQILALMTALTVLPSLVLGMSAFTRIIIVLSILRQALGTQQTPPNQVLIALALFLTFFVMQPTLGALYEQSLSPFLDGQIEAQPAIERGGAIMKDFLIANTRQNDLLMFSDLAGAGPYAEPTEVPFSTLLPAFMTSELKTAFQIGFLLFLPFLVIDMVIASILMALGMMMLSPMLVSLPFKLLLFVLVDGWALTVGSLAASYWGQ</sequence>
<reference key="1">
    <citation type="journal article" date="1998" name="J. Bacteriol.">
        <title>The flagellar switch genes fliM and fliN of Rhodobacter sphaeroides are contained in a large flagellar gene cluster.</title>
        <authorList>
            <person name="Garcia N."/>
            <person name="Campos A."/>
            <person name="Osorio A."/>
            <person name="Poggio S."/>
            <person name="Gonzalez-Pedrajo B."/>
            <person name="Camarena L."/>
            <person name="Dreyfus G."/>
        </authorList>
    </citation>
    <scope>NUCLEOTIDE SEQUENCE [GENOMIC DNA]</scope>
    <source>
        <strain>WS8</strain>
    </source>
</reference>
<organism>
    <name type="scientific">Cereibacter sphaeroides</name>
    <name type="common">Rhodobacter sphaeroides</name>
    <dbReference type="NCBI Taxonomy" id="1063"/>
    <lineage>
        <taxon>Bacteria</taxon>
        <taxon>Pseudomonadati</taxon>
        <taxon>Pseudomonadota</taxon>
        <taxon>Alphaproteobacteria</taxon>
        <taxon>Rhodobacterales</taxon>
        <taxon>Paracoccaceae</taxon>
        <taxon>Cereibacter</taxon>
    </lineage>
</organism>
<proteinExistence type="inferred from homology"/>
<feature type="chain" id="PRO_0000191988" description="Flagellar biosynthetic protein FliP">
    <location>
        <begin position="1"/>
        <end position="301"/>
    </location>
</feature>
<feature type="transmembrane region" description="Helical" evidence="2">
    <location>
        <begin position="64"/>
        <end position="84"/>
    </location>
</feature>
<feature type="transmembrane region" description="Helical" evidence="2">
    <location>
        <begin position="99"/>
        <end position="119"/>
    </location>
</feature>
<feature type="transmembrane region" description="Helical" evidence="2">
    <location>
        <begin position="143"/>
        <end position="163"/>
    </location>
</feature>
<feature type="transmembrane region" description="Helical" evidence="2">
    <location>
        <begin position="240"/>
        <end position="260"/>
    </location>
</feature>
<feature type="transmembrane region" description="Helical" evidence="2">
    <location>
        <begin position="264"/>
        <end position="284"/>
    </location>
</feature>
<feature type="region of interest" description="Disordered" evidence="3">
    <location>
        <begin position="1"/>
        <end position="24"/>
    </location>
</feature>
<evidence type="ECO:0000250" key="1"/>
<evidence type="ECO:0000255" key="2"/>
<evidence type="ECO:0000256" key="3">
    <source>
        <dbReference type="SAM" id="MobiDB-lite"/>
    </source>
</evidence>
<evidence type="ECO:0000305" key="4"/>
<dbReference type="EMBL" id="AF044580">
    <property type="protein sequence ID" value="AAC32322.1"/>
    <property type="molecule type" value="Genomic_DNA"/>
</dbReference>
<dbReference type="SMR" id="O85133"/>
<dbReference type="GO" id="GO:0009425">
    <property type="term" value="C:bacterial-type flagellum basal body"/>
    <property type="evidence" value="ECO:0007669"/>
    <property type="project" value="UniProtKB-SubCell"/>
</dbReference>
<dbReference type="GO" id="GO:0005886">
    <property type="term" value="C:plasma membrane"/>
    <property type="evidence" value="ECO:0007669"/>
    <property type="project" value="UniProtKB-SubCell"/>
</dbReference>
<dbReference type="GO" id="GO:0044781">
    <property type="term" value="P:bacterial-type flagellum organization"/>
    <property type="evidence" value="ECO:0007669"/>
    <property type="project" value="UniProtKB-KW"/>
</dbReference>
<dbReference type="GO" id="GO:0009306">
    <property type="term" value="P:protein secretion"/>
    <property type="evidence" value="ECO:0007669"/>
    <property type="project" value="InterPro"/>
</dbReference>
<dbReference type="InterPro" id="IPR005837">
    <property type="entry name" value="FliP"/>
</dbReference>
<dbReference type="InterPro" id="IPR005838">
    <property type="entry name" value="T3SS_IM_P"/>
</dbReference>
<dbReference type="NCBIfam" id="TIGR01103">
    <property type="entry name" value="fliP"/>
    <property type="match status" value="1"/>
</dbReference>
<dbReference type="NCBIfam" id="NF009438">
    <property type="entry name" value="PRK12797.1"/>
    <property type="match status" value="1"/>
</dbReference>
<dbReference type="PANTHER" id="PTHR30587">
    <property type="entry name" value="FLAGELLAR BIOSYNTHETIC PROTEIN FLIP"/>
    <property type="match status" value="1"/>
</dbReference>
<dbReference type="PANTHER" id="PTHR30587:SF0">
    <property type="entry name" value="FLAGELLAR BIOSYNTHETIC PROTEIN FLIP"/>
    <property type="match status" value="1"/>
</dbReference>
<dbReference type="Pfam" id="PF00813">
    <property type="entry name" value="FliP"/>
    <property type="match status" value="1"/>
</dbReference>
<dbReference type="PRINTS" id="PR00951">
    <property type="entry name" value="FLGBIOSNFLIP"/>
</dbReference>
<dbReference type="PRINTS" id="PR01302">
    <property type="entry name" value="TYPE3IMPPROT"/>
</dbReference>
<dbReference type="PROSITE" id="PS01060">
    <property type="entry name" value="FLIP_1"/>
    <property type="match status" value="1"/>
</dbReference>
<dbReference type="PROSITE" id="PS01061">
    <property type="entry name" value="FLIP_2"/>
    <property type="match status" value="1"/>
</dbReference>
<protein>
    <recommendedName>
        <fullName>Flagellar biosynthetic protein FliP</fullName>
    </recommendedName>
</protein>
<accession>O85133</accession>
<name>FLIP_CERSP</name>
<comment type="function">
    <text evidence="1">Plays a role in the flagellum-specific transport system.</text>
</comment>
<comment type="subcellular location">
    <subcellularLocation>
        <location evidence="4">Cell membrane</location>
        <topology evidence="4">Multi-pass membrane protein</topology>
    </subcellularLocation>
    <subcellularLocation>
        <location evidence="1">Bacterial flagellum basal body</location>
    </subcellularLocation>
</comment>
<comment type="similarity">
    <text evidence="4">Belongs to the FliP/MopC/SpaP family.</text>
</comment>